<proteinExistence type="inferred from homology"/>
<organism>
    <name type="scientific">Pyrococcus horikoshii (strain ATCC 700860 / DSM 12428 / JCM 9974 / NBRC 100139 / OT-3)</name>
    <dbReference type="NCBI Taxonomy" id="70601"/>
    <lineage>
        <taxon>Archaea</taxon>
        <taxon>Methanobacteriati</taxon>
        <taxon>Methanobacteriota</taxon>
        <taxon>Thermococci</taxon>
        <taxon>Thermococcales</taxon>
        <taxon>Thermococcaceae</taxon>
        <taxon>Pyrococcus</taxon>
    </lineage>
</organism>
<dbReference type="EMBL" id="BA000001">
    <property type="protein sequence ID" value="BAA30590.1"/>
    <property type="molecule type" value="Genomic_DNA"/>
</dbReference>
<dbReference type="PIR" id="F71023">
    <property type="entry name" value="F71023"/>
</dbReference>
<dbReference type="SMR" id="O59152"/>
<dbReference type="STRING" id="70601.gene:9378462"/>
<dbReference type="EnsemblBacteria" id="BAA30590">
    <property type="protein sequence ID" value="BAA30590"/>
    <property type="gene ID" value="BAA30590"/>
</dbReference>
<dbReference type="KEGG" id="pho:PH1483"/>
<dbReference type="eggNOG" id="arCOG01758">
    <property type="taxonomic scope" value="Archaea"/>
</dbReference>
<dbReference type="OrthoDB" id="371736at2157"/>
<dbReference type="Proteomes" id="UP000000752">
    <property type="component" value="Chromosome"/>
</dbReference>
<dbReference type="GO" id="GO:0015935">
    <property type="term" value="C:small ribosomal subunit"/>
    <property type="evidence" value="ECO:0007669"/>
    <property type="project" value="InterPro"/>
</dbReference>
<dbReference type="GO" id="GO:0003735">
    <property type="term" value="F:structural constituent of ribosome"/>
    <property type="evidence" value="ECO:0007669"/>
    <property type="project" value="InterPro"/>
</dbReference>
<dbReference type="GO" id="GO:0000049">
    <property type="term" value="F:tRNA binding"/>
    <property type="evidence" value="ECO:0007669"/>
    <property type="project" value="UniProtKB-UniRule"/>
</dbReference>
<dbReference type="GO" id="GO:0006412">
    <property type="term" value="P:translation"/>
    <property type="evidence" value="ECO:0007669"/>
    <property type="project" value="UniProtKB-UniRule"/>
</dbReference>
<dbReference type="FunFam" id="3.30.70.600:FF:000004">
    <property type="entry name" value="30S ribosomal protein S10"/>
    <property type="match status" value="1"/>
</dbReference>
<dbReference type="Gene3D" id="3.30.70.600">
    <property type="entry name" value="Ribosomal protein S10 domain"/>
    <property type="match status" value="1"/>
</dbReference>
<dbReference type="HAMAP" id="MF_00508">
    <property type="entry name" value="Ribosomal_uS10"/>
    <property type="match status" value="1"/>
</dbReference>
<dbReference type="InterPro" id="IPR001848">
    <property type="entry name" value="Ribosomal_uS10"/>
</dbReference>
<dbReference type="InterPro" id="IPR018268">
    <property type="entry name" value="Ribosomal_uS10_CS"/>
</dbReference>
<dbReference type="InterPro" id="IPR027486">
    <property type="entry name" value="Ribosomal_uS10_dom"/>
</dbReference>
<dbReference type="InterPro" id="IPR036838">
    <property type="entry name" value="Ribosomal_uS10_dom_sf"/>
</dbReference>
<dbReference type="InterPro" id="IPR005729">
    <property type="entry name" value="Ribosomal_uS10_euk/arc"/>
</dbReference>
<dbReference type="NCBIfam" id="TIGR01046">
    <property type="entry name" value="uS10_euk_arch"/>
    <property type="match status" value="1"/>
</dbReference>
<dbReference type="PANTHER" id="PTHR11700">
    <property type="entry name" value="30S RIBOSOMAL PROTEIN S10 FAMILY MEMBER"/>
    <property type="match status" value="1"/>
</dbReference>
<dbReference type="Pfam" id="PF00338">
    <property type="entry name" value="Ribosomal_S10"/>
    <property type="match status" value="1"/>
</dbReference>
<dbReference type="PRINTS" id="PR00971">
    <property type="entry name" value="RIBOSOMALS10"/>
</dbReference>
<dbReference type="SMART" id="SM01403">
    <property type="entry name" value="Ribosomal_S10"/>
    <property type="match status" value="1"/>
</dbReference>
<dbReference type="SUPFAM" id="SSF54999">
    <property type="entry name" value="Ribosomal protein S10"/>
    <property type="match status" value="1"/>
</dbReference>
<dbReference type="PROSITE" id="PS00361">
    <property type="entry name" value="RIBOSOMAL_S10"/>
    <property type="match status" value="1"/>
</dbReference>
<evidence type="ECO:0000255" key="1">
    <source>
        <dbReference type="HAMAP-Rule" id="MF_00508"/>
    </source>
</evidence>
<evidence type="ECO:0000305" key="2"/>
<keyword id="KW-0687">Ribonucleoprotein</keyword>
<keyword id="KW-0689">Ribosomal protein</keyword>
<gene>
    <name evidence="1" type="primary">rps10</name>
    <name type="ordered locus">PH1483</name>
</gene>
<reference key="1">
    <citation type="journal article" date="1998" name="DNA Res.">
        <title>Complete sequence and gene organization of the genome of a hyper-thermophilic archaebacterium, Pyrococcus horikoshii OT3.</title>
        <authorList>
            <person name="Kawarabayasi Y."/>
            <person name="Sawada M."/>
            <person name="Horikawa H."/>
            <person name="Haikawa Y."/>
            <person name="Hino Y."/>
            <person name="Yamamoto S."/>
            <person name="Sekine M."/>
            <person name="Baba S."/>
            <person name="Kosugi H."/>
            <person name="Hosoyama A."/>
            <person name="Nagai Y."/>
            <person name="Sakai M."/>
            <person name="Ogura K."/>
            <person name="Otsuka R."/>
            <person name="Nakazawa H."/>
            <person name="Takamiya M."/>
            <person name="Ohfuku Y."/>
            <person name="Funahashi T."/>
            <person name="Tanaka T."/>
            <person name="Kudoh Y."/>
            <person name="Yamazaki J."/>
            <person name="Kushida N."/>
            <person name="Oguchi A."/>
            <person name="Aoki K."/>
            <person name="Yoshizawa T."/>
            <person name="Nakamura Y."/>
            <person name="Robb F.T."/>
            <person name="Horikoshi K."/>
            <person name="Masuchi Y."/>
            <person name="Shizuya H."/>
            <person name="Kikuchi H."/>
        </authorList>
    </citation>
    <scope>NUCLEOTIDE SEQUENCE [LARGE SCALE GENOMIC DNA]</scope>
    <source>
        <strain>ATCC 700860 / DSM 12428 / JCM 9974 / NBRC 100139 / OT-3</strain>
    </source>
</reference>
<name>RS10_PYRHO</name>
<protein>
    <recommendedName>
        <fullName evidence="1">Small ribosomal subunit protein uS10</fullName>
    </recommendedName>
    <alternativeName>
        <fullName evidence="2">30S ribosomal protein S10</fullName>
    </alternativeName>
</protein>
<comment type="function">
    <text evidence="1">Involved in the binding of tRNA to the ribosomes.</text>
</comment>
<comment type="subunit">
    <text evidence="1">Part of the 30S ribosomal subunit.</text>
</comment>
<comment type="similarity">
    <text evidence="1">Belongs to the universal ribosomal protein uS10 family.</text>
</comment>
<feature type="chain" id="PRO_0000146656" description="Small ribosomal subunit protein uS10">
    <location>
        <begin position="1"/>
        <end position="102"/>
    </location>
</feature>
<sequence>MQKARIKLASTNVRSLEEVANQIRQIAERTGVRMSGPIPLPTKRIRIVTRKSPDGEGSATFDRWELRIHKRLIDIEADERAMRQIMRIRVPEDVTIEIELIS</sequence>
<accession>O59152</accession>